<sequence length="171" mass="18675">MTRQNAYTREDLLACSRGELFGPGNAQLPAPNMLMIDRIVHISETGGKHGKGEIVAELDINPDLWFFSCHFEGDPVMPGCLGLDAMWQLVGFYLGWQGNPGRGRALGSGEVKFFGQVLPTAKKVTYNIHIKRTINRSLILGIADGSVSVDGREIYSAEGLRVGLFTSTDSF</sequence>
<name>FABA_ECTM1</name>
<comment type="function">
    <text evidence="1">Necessary for the introduction of cis unsaturation into fatty acids. Catalyzes the dehydration of (3R)-3-hydroxydecanoyl-ACP to E-(2)-decenoyl-ACP and then its isomerization to Z-(3)-decenoyl-ACP. Can catalyze the dehydratase reaction for beta-hydroxyacyl-ACPs with saturated chain lengths up to 16:0, being most active on intermediate chain length.</text>
</comment>
<comment type="catalytic activity">
    <reaction evidence="1">
        <text>a (3R)-hydroxyacyl-[ACP] = a (2E)-enoyl-[ACP] + H2O</text>
        <dbReference type="Rhea" id="RHEA:13097"/>
        <dbReference type="Rhea" id="RHEA-COMP:9925"/>
        <dbReference type="Rhea" id="RHEA-COMP:9945"/>
        <dbReference type="ChEBI" id="CHEBI:15377"/>
        <dbReference type="ChEBI" id="CHEBI:78784"/>
        <dbReference type="ChEBI" id="CHEBI:78827"/>
        <dbReference type="EC" id="4.2.1.59"/>
    </reaction>
</comment>
<comment type="catalytic activity">
    <reaction evidence="1">
        <text>(3R)-hydroxydecanoyl-[ACP] = (2E)-decenoyl-[ACP] + H2O</text>
        <dbReference type="Rhea" id="RHEA:41860"/>
        <dbReference type="Rhea" id="RHEA-COMP:9638"/>
        <dbReference type="Rhea" id="RHEA-COMP:9639"/>
        <dbReference type="ChEBI" id="CHEBI:15377"/>
        <dbReference type="ChEBI" id="CHEBI:78466"/>
        <dbReference type="ChEBI" id="CHEBI:78467"/>
    </reaction>
</comment>
<comment type="catalytic activity">
    <reaction evidence="1">
        <text>(2E)-decenoyl-[ACP] = (3Z)-decenoyl-[ACP]</text>
        <dbReference type="Rhea" id="RHEA:23568"/>
        <dbReference type="Rhea" id="RHEA-COMP:9639"/>
        <dbReference type="Rhea" id="RHEA-COMP:9927"/>
        <dbReference type="ChEBI" id="CHEBI:78467"/>
        <dbReference type="ChEBI" id="CHEBI:78798"/>
        <dbReference type="EC" id="5.3.3.14"/>
    </reaction>
</comment>
<comment type="pathway">
    <text evidence="1">Lipid metabolism; fatty acid biosynthesis.</text>
</comment>
<comment type="subunit">
    <text evidence="1">Homodimer.</text>
</comment>
<comment type="subcellular location">
    <subcellularLocation>
        <location evidence="1">Cytoplasm</location>
    </subcellularLocation>
</comment>
<comment type="similarity">
    <text evidence="1">Belongs to the thioester dehydratase family. FabA subfamily.</text>
</comment>
<reference key="1">
    <citation type="submission" date="2007-04" db="EMBL/GenBank/DDBJ databases">
        <title>Complete sequence of Pseudomonas mendocina ymp.</title>
        <authorList>
            <consortium name="US DOE Joint Genome Institute"/>
            <person name="Copeland A."/>
            <person name="Lucas S."/>
            <person name="Lapidus A."/>
            <person name="Barry K."/>
            <person name="Glavina del Rio T."/>
            <person name="Dalin E."/>
            <person name="Tice H."/>
            <person name="Pitluck S."/>
            <person name="Kiss H."/>
            <person name="Brettin T."/>
            <person name="Detter J.C."/>
            <person name="Bruce D."/>
            <person name="Han C."/>
            <person name="Schmutz J."/>
            <person name="Larimer F."/>
            <person name="Land M."/>
            <person name="Hauser L."/>
            <person name="Kyrpides N."/>
            <person name="Mikhailova N."/>
            <person name="Hersman L."/>
            <person name="Dubois J."/>
            <person name="Maurice P."/>
            <person name="Richardson P."/>
        </authorList>
    </citation>
    <scope>NUCLEOTIDE SEQUENCE [LARGE SCALE GENOMIC DNA]</scope>
    <source>
        <strain>ymp</strain>
    </source>
</reference>
<proteinExistence type="inferred from homology"/>
<accession>A4XV59</accession>
<organism>
    <name type="scientific">Ectopseudomonas mendocina (strain ymp)</name>
    <name type="common">Pseudomonas mendocina</name>
    <dbReference type="NCBI Taxonomy" id="399739"/>
    <lineage>
        <taxon>Bacteria</taxon>
        <taxon>Pseudomonadati</taxon>
        <taxon>Pseudomonadota</taxon>
        <taxon>Gammaproteobacteria</taxon>
        <taxon>Pseudomonadales</taxon>
        <taxon>Pseudomonadaceae</taxon>
        <taxon>Ectopseudomonas</taxon>
    </lineage>
</organism>
<gene>
    <name evidence="1" type="primary">fabA</name>
    <name type="ordered locus">Pmen_2469</name>
</gene>
<dbReference type="EC" id="4.2.1.59" evidence="1"/>
<dbReference type="EC" id="5.3.3.14" evidence="1"/>
<dbReference type="EMBL" id="CP000680">
    <property type="protein sequence ID" value="ABP85225.1"/>
    <property type="molecule type" value="Genomic_DNA"/>
</dbReference>
<dbReference type="SMR" id="A4XV59"/>
<dbReference type="STRING" id="399739.Pmen_2469"/>
<dbReference type="KEGG" id="pmy:Pmen_2469"/>
<dbReference type="PATRIC" id="fig|399739.8.peg.2494"/>
<dbReference type="eggNOG" id="COG0764">
    <property type="taxonomic scope" value="Bacteria"/>
</dbReference>
<dbReference type="HOGENOM" id="CLU_097925_0_0_6"/>
<dbReference type="OrthoDB" id="9786735at2"/>
<dbReference type="UniPathway" id="UPA00094"/>
<dbReference type="GO" id="GO:0005737">
    <property type="term" value="C:cytoplasm"/>
    <property type="evidence" value="ECO:0007669"/>
    <property type="project" value="UniProtKB-SubCell"/>
</dbReference>
<dbReference type="GO" id="GO:0019171">
    <property type="term" value="F:(3R)-hydroxyacyl-[acyl-carrier-protein] dehydratase activity"/>
    <property type="evidence" value="ECO:0007669"/>
    <property type="project" value="UniProtKB-UniRule"/>
</dbReference>
<dbReference type="GO" id="GO:0034017">
    <property type="term" value="F:trans-2-decenoyl-acyl-carrier-protein isomerase activity"/>
    <property type="evidence" value="ECO:0007669"/>
    <property type="project" value="UniProtKB-UniRule"/>
</dbReference>
<dbReference type="GO" id="GO:0006636">
    <property type="term" value="P:unsaturated fatty acid biosynthetic process"/>
    <property type="evidence" value="ECO:0007669"/>
    <property type="project" value="UniProtKB-UniRule"/>
</dbReference>
<dbReference type="CDD" id="cd01287">
    <property type="entry name" value="FabA"/>
    <property type="match status" value="1"/>
</dbReference>
<dbReference type="FunFam" id="3.10.129.10:FF:000003">
    <property type="entry name" value="3-hydroxydecanoyl-[acyl-carrier-protein] dehydratase"/>
    <property type="match status" value="1"/>
</dbReference>
<dbReference type="Gene3D" id="3.10.129.10">
    <property type="entry name" value="Hotdog Thioesterase"/>
    <property type="match status" value="1"/>
</dbReference>
<dbReference type="HAMAP" id="MF_00405">
    <property type="entry name" value="FabA"/>
    <property type="match status" value="1"/>
</dbReference>
<dbReference type="InterPro" id="IPR010083">
    <property type="entry name" value="FabA"/>
</dbReference>
<dbReference type="InterPro" id="IPR013114">
    <property type="entry name" value="FabA_FabZ"/>
</dbReference>
<dbReference type="InterPro" id="IPR029069">
    <property type="entry name" value="HotDog_dom_sf"/>
</dbReference>
<dbReference type="NCBIfam" id="TIGR01749">
    <property type="entry name" value="fabA"/>
    <property type="match status" value="1"/>
</dbReference>
<dbReference type="NCBIfam" id="NF003509">
    <property type="entry name" value="PRK05174.1"/>
    <property type="match status" value="1"/>
</dbReference>
<dbReference type="PANTHER" id="PTHR30272">
    <property type="entry name" value="3-HYDROXYACYL-[ACYL-CARRIER-PROTEIN] DEHYDRATASE"/>
    <property type="match status" value="1"/>
</dbReference>
<dbReference type="PANTHER" id="PTHR30272:SF8">
    <property type="entry name" value="3-HYDROXYDECANOYL-[ACYL-CARRIER-PROTEIN] DEHYDRATASE"/>
    <property type="match status" value="1"/>
</dbReference>
<dbReference type="Pfam" id="PF07977">
    <property type="entry name" value="FabA"/>
    <property type="match status" value="1"/>
</dbReference>
<dbReference type="SUPFAM" id="SSF54637">
    <property type="entry name" value="Thioesterase/thiol ester dehydrase-isomerase"/>
    <property type="match status" value="1"/>
</dbReference>
<feature type="chain" id="PRO_1000049829" description="3-hydroxydecanoyl-[acyl-carrier-protein] dehydratase">
    <location>
        <begin position="1"/>
        <end position="171"/>
    </location>
</feature>
<feature type="active site" evidence="1">
    <location>
        <position position="70"/>
    </location>
</feature>
<evidence type="ECO:0000255" key="1">
    <source>
        <dbReference type="HAMAP-Rule" id="MF_00405"/>
    </source>
</evidence>
<keyword id="KW-0963">Cytoplasm</keyword>
<keyword id="KW-0275">Fatty acid biosynthesis</keyword>
<keyword id="KW-0276">Fatty acid metabolism</keyword>
<keyword id="KW-0413">Isomerase</keyword>
<keyword id="KW-0444">Lipid biosynthesis</keyword>
<keyword id="KW-0443">Lipid metabolism</keyword>
<keyword id="KW-0456">Lyase</keyword>
<protein>
    <recommendedName>
        <fullName evidence="1">3-hydroxydecanoyl-[acyl-carrier-protein] dehydratase</fullName>
        <ecNumber evidence="1">4.2.1.59</ecNumber>
    </recommendedName>
    <alternativeName>
        <fullName evidence="1">3-hydroxyacyl-[acyl-carrier-protein] dehydratase FabA</fullName>
    </alternativeName>
    <alternativeName>
        <fullName evidence="1">Beta-hydroxydecanoyl thioester dehydrase</fullName>
    </alternativeName>
    <alternativeName>
        <fullName evidence="1">Trans-2-decenoyl-[acyl-carrier-protein] isomerase</fullName>
        <ecNumber evidence="1">5.3.3.14</ecNumber>
    </alternativeName>
</protein>